<feature type="signal peptide" evidence="3">
    <location>
        <begin position="1" status="less than"/>
        <end position="11"/>
    </location>
</feature>
<feature type="propeptide" id="PRO_0000414304" evidence="1">
    <location>
        <begin position="12"/>
        <end position="19"/>
    </location>
</feature>
<feature type="chain" id="PRO_0000414305" description="Basic phospholipase A2 2">
    <location>
        <begin position="20"/>
        <end position="137"/>
    </location>
</feature>
<feature type="active site" evidence="2">
    <location>
        <position position="65"/>
    </location>
</feature>
<feature type="active site" evidence="2">
    <location>
        <position position="111"/>
    </location>
</feature>
<feature type="binding site" evidence="2">
    <location>
        <position position="45"/>
    </location>
    <ligand>
        <name>Ca(2+)</name>
        <dbReference type="ChEBI" id="CHEBI:29108"/>
    </ligand>
</feature>
<feature type="binding site" evidence="2">
    <location>
        <position position="47"/>
    </location>
    <ligand>
        <name>Ca(2+)</name>
        <dbReference type="ChEBI" id="CHEBI:29108"/>
    </ligand>
</feature>
<feature type="binding site" evidence="6">
    <location>
        <position position="48"/>
    </location>
    <ligand>
        <name>alpha-D-mannopyranose</name>
        <dbReference type="ChEBI" id="CHEBI:28729"/>
    </ligand>
</feature>
<feature type="binding site" evidence="2">
    <location>
        <position position="49"/>
    </location>
    <ligand>
        <name>Ca(2+)</name>
        <dbReference type="ChEBI" id="CHEBI:29108"/>
    </ligand>
</feature>
<feature type="binding site" evidence="6">
    <location>
        <position position="66"/>
    </location>
    <ligand>
        <name>alpha-D-mannopyranose</name>
        <dbReference type="ChEBI" id="CHEBI:28729"/>
    </ligand>
</feature>
<feature type="binding site" evidence="2">
    <location>
        <position position="66"/>
    </location>
    <ligand>
        <name>Ca(2+)</name>
        <dbReference type="ChEBI" id="CHEBI:29108"/>
    </ligand>
</feature>
<feature type="disulfide bond" evidence="6 8">
    <location>
        <begin position="30"/>
        <end position="89"/>
    </location>
</feature>
<feature type="disulfide bond" evidence="6 8">
    <location>
        <begin position="44"/>
        <end position="136"/>
    </location>
</feature>
<feature type="disulfide bond" evidence="6 8">
    <location>
        <begin position="46"/>
        <end position="62"/>
    </location>
</feature>
<feature type="disulfide bond" evidence="6 8">
    <location>
        <begin position="61"/>
        <end position="117"/>
    </location>
</feature>
<feature type="disulfide bond" evidence="6 8">
    <location>
        <begin position="68"/>
        <end position="110"/>
    </location>
</feature>
<feature type="disulfide bond" evidence="6 8">
    <location>
        <begin position="78"/>
        <end position="103"/>
    </location>
</feature>
<feature type="disulfide bond" evidence="6 8">
    <location>
        <begin position="96"/>
        <end position="108"/>
    </location>
</feature>
<feature type="non-terminal residue">
    <location>
        <position position="1"/>
    </location>
</feature>
<feature type="helix" evidence="9">
    <location>
        <begin position="21"/>
        <end position="31"/>
    </location>
</feature>
<feature type="strand" evidence="9">
    <location>
        <begin position="32"/>
        <end position="34"/>
    </location>
</feature>
<feature type="helix" evidence="9">
    <location>
        <begin position="36"/>
        <end position="39"/>
    </location>
</feature>
<feature type="strand" evidence="9">
    <location>
        <begin position="40"/>
        <end position="42"/>
    </location>
</feature>
<feature type="turn" evidence="9">
    <location>
        <begin position="43"/>
        <end position="45"/>
    </location>
</feature>
<feature type="strand" evidence="9">
    <location>
        <begin position="46"/>
        <end position="48"/>
    </location>
</feature>
<feature type="helix" evidence="9">
    <location>
        <begin position="57"/>
        <end position="72"/>
    </location>
</feature>
<feature type="turn" evidence="9">
    <location>
        <begin position="80"/>
        <end position="82"/>
    </location>
</feature>
<feature type="strand" evidence="9">
    <location>
        <begin position="87"/>
        <end position="90"/>
    </location>
</feature>
<feature type="strand" evidence="9">
    <location>
        <begin position="93"/>
        <end position="96"/>
    </location>
</feature>
<feature type="helix" evidence="9">
    <location>
        <begin position="102"/>
        <end position="120"/>
    </location>
</feature>
<feature type="helix" evidence="9">
    <location>
        <begin position="125"/>
        <end position="127"/>
    </location>
</feature>
<feature type="helix" evidence="9">
    <location>
        <begin position="134"/>
        <end position="136"/>
    </location>
</feature>
<evidence type="ECO:0000250" key="1"/>
<evidence type="ECO:0000250" key="2">
    <source>
        <dbReference type="UniProtKB" id="P14418"/>
    </source>
</evidence>
<evidence type="ECO:0000255" key="3"/>
<evidence type="ECO:0000255" key="4">
    <source>
        <dbReference type="PROSITE-ProRule" id="PRU10035"/>
    </source>
</evidence>
<evidence type="ECO:0000255" key="5">
    <source>
        <dbReference type="PROSITE-ProRule" id="PRU10036"/>
    </source>
</evidence>
<evidence type="ECO:0000269" key="6">
    <source>
    </source>
</evidence>
<evidence type="ECO:0000305" key="7"/>
<evidence type="ECO:0007744" key="8">
    <source>
        <dbReference type="PDB" id="1U4J"/>
    </source>
</evidence>
<evidence type="ECO:0007829" key="9">
    <source>
        <dbReference type="PDB" id="1G0Z"/>
    </source>
</evidence>
<organism>
    <name type="scientific">Bungarus caeruleus</name>
    <name type="common">Indian krait</name>
    <dbReference type="NCBI Taxonomy" id="132961"/>
    <lineage>
        <taxon>Eukaryota</taxon>
        <taxon>Metazoa</taxon>
        <taxon>Chordata</taxon>
        <taxon>Craniata</taxon>
        <taxon>Vertebrata</taxon>
        <taxon>Euteleostomi</taxon>
        <taxon>Lepidosauria</taxon>
        <taxon>Squamata</taxon>
        <taxon>Bifurcata</taxon>
        <taxon>Unidentata</taxon>
        <taxon>Episquamata</taxon>
        <taxon>Toxicofera</taxon>
        <taxon>Serpentes</taxon>
        <taxon>Colubroidea</taxon>
        <taxon>Elapidae</taxon>
        <taxon>Bungarinae</taxon>
        <taxon>Bungarus</taxon>
    </lineage>
</organism>
<sequence>LVAVCVSLLGAANIPPQPLNLKQFKNMIQCAGTRTWTSYIGYGCYCGYGGSGTPVDELDRCCYTHDHCYNKAANIPGCNPLIKTYSYTCTKPNITCNDTSDSCARFICDCDRTAAICFASAPYNINNIMISASTSCQ</sequence>
<dbReference type="EC" id="3.1.1.4"/>
<dbReference type="EMBL" id="AY455755">
    <property type="protein sequence ID" value="AAR19228.1"/>
    <property type="molecule type" value="mRNA"/>
</dbReference>
<dbReference type="PDB" id="1G0Z">
    <property type="method" value="X-ray"/>
    <property type="resolution" value="2.18 A"/>
    <property type="chains" value="A/B=20-137"/>
</dbReference>
<dbReference type="PDB" id="1U4J">
    <property type="method" value="X-ray"/>
    <property type="resolution" value="2.18 A"/>
    <property type="chains" value="A/B=20-137"/>
</dbReference>
<dbReference type="PDBsum" id="1G0Z"/>
<dbReference type="PDBsum" id="1U4J"/>
<dbReference type="SMR" id="Q6SLM1"/>
<dbReference type="BRENDA" id="3.1.1.4">
    <property type="organism ID" value="8193"/>
</dbReference>
<dbReference type="EvolutionaryTrace" id="Q6SLM1"/>
<dbReference type="GO" id="GO:0005576">
    <property type="term" value="C:extracellular region"/>
    <property type="evidence" value="ECO:0007669"/>
    <property type="project" value="UniProtKB-SubCell"/>
</dbReference>
<dbReference type="GO" id="GO:0005509">
    <property type="term" value="F:calcium ion binding"/>
    <property type="evidence" value="ECO:0007669"/>
    <property type="project" value="InterPro"/>
</dbReference>
<dbReference type="GO" id="GO:0047498">
    <property type="term" value="F:calcium-dependent phospholipase A2 activity"/>
    <property type="evidence" value="ECO:0007669"/>
    <property type="project" value="TreeGrafter"/>
</dbReference>
<dbReference type="GO" id="GO:0005543">
    <property type="term" value="F:phospholipid binding"/>
    <property type="evidence" value="ECO:0007669"/>
    <property type="project" value="TreeGrafter"/>
</dbReference>
<dbReference type="GO" id="GO:0090729">
    <property type="term" value="F:toxin activity"/>
    <property type="evidence" value="ECO:0007669"/>
    <property type="project" value="UniProtKB-KW"/>
</dbReference>
<dbReference type="GO" id="GO:0050482">
    <property type="term" value="P:arachidonate secretion"/>
    <property type="evidence" value="ECO:0007669"/>
    <property type="project" value="InterPro"/>
</dbReference>
<dbReference type="GO" id="GO:0016042">
    <property type="term" value="P:lipid catabolic process"/>
    <property type="evidence" value="ECO:0007669"/>
    <property type="project" value="InterPro"/>
</dbReference>
<dbReference type="GO" id="GO:0006644">
    <property type="term" value="P:phospholipid metabolic process"/>
    <property type="evidence" value="ECO:0007669"/>
    <property type="project" value="InterPro"/>
</dbReference>
<dbReference type="CDD" id="cd00125">
    <property type="entry name" value="PLA2c"/>
    <property type="match status" value="1"/>
</dbReference>
<dbReference type="FunFam" id="1.20.90.10:FF:000007">
    <property type="entry name" value="Acidic phospholipase A2"/>
    <property type="match status" value="1"/>
</dbReference>
<dbReference type="Gene3D" id="1.20.90.10">
    <property type="entry name" value="Phospholipase A2 domain"/>
    <property type="match status" value="1"/>
</dbReference>
<dbReference type="InterPro" id="IPR001211">
    <property type="entry name" value="PLipase_A2"/>
</dbReference>
<dbReference type="InterPro" id="IPR033112">
    <property type="entry name" value="PLipase_A2_Asp_AS"/>
</dbReference>
<dbReference type="InterPro" id="IPR016090">
    <property type="entry name" value="PLipase_A2_dom"/>
</dbReference>
<dbReference type="InterPro" id="IPR036444">
    <property type="entry name" value="PLipase_A2_dom_sf"/>
</dbReference>
<dbReference type="InterPro" id="IPR033113">
    <property type="entry name" value="PLipase_A2_His_AS"/>
</dbReference>
<dbReference type="PANTHER" id="PTHR11716:SF94">
    <property type="entry name" value="PHOSPHOLIPASE A2"/>
    <property type="match status" value="1"/>
</dbReference>
<dbReference type="PANTHER" id="PTHR11716">
    <property type="entry name" value="PHOSPHOLIPASE A2 FAMILY MEMBER"/>
    <property type="match status" value="1"/>
</dbReference>
<dbReference type="Pfam" id="PF00068">
    <property type="entry name" value="Phospholip_A2_1"/>
    <property type="match status" value="1"/>
</dbReference>
<dbReference type="PRINTS" id="PR00389">
    <property type="entry name" value="PHPHLIPASEA2"/>
</dbReference>
<dbReference type="SMART" id="SM00085">
    <property type="entry name" value="PA2c"/>
    <property type="match status" value="1"/>
</dbReference>
<dbReference type="SUPFAM" id="SSF48619">
    <property type="entry name" value="Phospholipase A2, PLA2"/>
    <property type="match status" value="1"/>
</dbReference>
<dbReference type="PROSITE" id="PS00119">
    <property type="entry name" value="PA2_ASP"/>
    <property type="match status" value="1"/>
</dbReference>
<dbReference type="PROSITE" id="PS00118">
    <property type="entry name" value="PA2_HIS"/>
    <property type="match status" value="1"/>
</dbReference>
<comment type="function">
    <text evidence="1">Snake venom phospholipase A2 (PLA2) that shows anticoagulant and neurotoxic activities.</text>
</comment>
<comment type="function">
    <text>PLA2 catalyzes the calcium-dependent hydrolysis of the 2-acyl groups in 3-sn-phosphoglycerides.</text>
</comment>
<comment type="catalytic activity">
    <reaction evidence="4 5">
        <text>a 1,2-diacyl-sn-glycero-3-phosphocholine + H2O = a 1-acyl-sn-glycero-3-phosphocholine + a fatty acid + H(+)</text>
        <dbReference type="Rhea" id="RHEA:15801"/>
        <dbReference type="ChEBI" id="CHEBI:15377"/>
        <dbReference type="ChEBI" id="CHEBI:15378"/>
        <dbReference type="ChEBI" id="CHEBI:28868"/>
        <dbReference type="ChEBI" id="CHEBI:57643"/>
        <dbReference type="ChEBI" id="CHEBI:58168"/>
        <dbReference type="EC" id="3.1.1.4"/>
    </reaction>
</comment>
<comment type="cofactor">
    <cofactor evidence="2">
        <name>Ca(2+)</name>
        <dbReference type="ChEBI" id="CHEBI:29108"/>
    </cofactor>
    <text evidence="2">Binds 1 Ca(2+) ion per subunit.</text>
</comment>
<comment type="subunit">
    <text evidence="6">Homodimer; non-covalently linked.</text>
</comment>
<comment type="subcellular location">
    <subcellularLocation>
        <location>Secreted</location>
    </subcellularLocation>
</comment>
<comment type="tissue specificity">
    <text>Expressed by the venom gland.</text>
</comment>
<comment type="PTM">
    <text>Homodimerization and interaction of the catalytically important Asp-49 (here Asp-111) with mannose molecules may render this protein inactive.</text>
</comment>
<comment type="similarity">
    <text evidence="7">Belongs to the phospholipase A2 family. Group I subfamily. D49 sub-subfamily.</text>
</comment>
<reference key="1">
    <citation type="journal article" date="2005" name="J. Struct. Biol.">
        <title>Crystal structure of a carbohydrate induced homodimer of phospholipase A2 from Bungarus caeruleus at 2.1A resolution.</title>
        <authorList>
            <person name="Singh G."/>
            <person name="Gourinath S."/>
            <person name="Sarvanan K."/>
            <person name="Sharma S."/>
            <person name="Bhanumathi S."/>
            <person name="Betzel C."/>
            <person name="Yadav S."/>
            <person name="Srinivasan A."/>
            <person name="Singh T.P."/>
        </authorList>
    </citation>
    <scope>NUCLEOTIDE SEQUENCE [MRNA]</scope>
    <scope>X-RAY CRYSTALLOGRAPHY (2.18 ANGSTROMS) OF 20-137 IN COMPLEX WITH MANNOSE</scope>
    <scope>SUBUNIT</scope>
    <scope>DISULFIDE BONDS</scope>
    <source>
        <tissue>Venom</tissue>
        <tissue>Venom gland</tissue>
    </source>
</reference>
<proteinExistence type="evidence at protein level"/>
<name>PA2B5_BUNCE</name>
<protein>
    <recommendedName>
        <fullName>Basic phospholipase A2 2</fullName>
        <shortName>svPLA2</shortName>
        <ecNumber>3.1.1.4</ecNumber>
    </recommendedName>
    <alternativeName>
        <fullName>Phosphatidylcholine 2-acylhydrolase</fullName>
    </alternativeName>
</protein>
<keyword id="KW-0002">3D-structure</keyword>
<keyword id="KW-0106">Calcium</keyword>
<keyword id="KW-1015">Disulfide bond</keyword>
<keyword id="KW-0378">Hydrolase</keyword>
<keyword id="KW-0479">Metal-binding</keyword>
<keyword id="KW-0964">Secreted</keyword>
<keyword id="KW-0732">Signal</keyword>
<keyword id="KW-0800">Toxin</keyword>
<accession>Q6SLM1</accession>